<protein>
    <recommendedName>
        <fullName evidence="1">Septation ring formation regulator EzrA</fullName>
    </recommendedName>
</protein>
<sequence length="570" mass="66525">MDSILTIVIIVVSSILVLLMIELVIRNRSYKDIEALEQWKQEIKDKPVADELKRVKDLNMTGQTEELFGKWREEWDEIVSTTIPKAEKDLAQARKFASQFSFRKAKHAMNESISGLDDADNRITDILNELQQLLESHEKNSSEIEGLRDTYRSMKKSVLAHRHMYGAAEQKIEEMLDAESEKFKTFEEATNNGDYLKAREIVISLEEGLADLEIIIHQIPDLLVECQATLPVQLEDLLHGHNDMVRQGYVLEYLEIPKEVRDMKKQLQICLMDIQELHITEAAEKVENLKTSLDSFYDQLEQEVHARHYVEQKTLSVYEDLEEIRIETIETKAETQLVKQSYQLQDKDIESQKVIEKQMHILMKRFEMLQLRVAEQDIAFSIIREELEEIYEQCETLKVLHAEYKEMLQTMRKEEFEAREKLQEMRNTIFETKRFMQKSNLPGLPESIMEDLKRGQMAMQAVYEQLEVKPLNMNAVNSSLEEAYTTVNGVAEMTEELIGQAYLVEKLIQYGNRYRSHDENLADSLNYAEKLFREYQYDAALEQAASVLEQLEPGVVQKIAEYVDNEQTLS</sequence>
<dbReference type="EMBL" id="CP000227">
    <property type="protein sequence ID" value="ACM14891.1"/>
    <property type="molecule type" value="Genomic_DNA"/>
</dbReference>
<dbReference type="SMR" id="B9J153"/>
<dbReference type="KEGG" id="bcq:BCQ_4465"/>
<dbReference type="HOGENOM" id="CLU_034079_1_0_9"/>
<dbReference type="Proteomes" id="UP000000441">
    <property type="component" value="Chromosome"/>
</dbReference>
<dbReference type="GO" id="GO:0005886">
    <property type="term" value="C:plasma membrane"/>
    <property type="evidence" value="ECO:0007669"/>
    <property type="project" value="UniProtKB-SubCell"/>
</dbReference>
<dbReference type="GO" id="GO:0005940">
    <property type="term" value="C:septin ring"/>
    <property type="evidence" value="ECO:0007669"/>
    <property type="project" value="InterPro"/>
</dbReference>
<dbReference type="GO" id="GO:0000917">
    <property type="term" value="P:division septum assembly"/>
    <property type="evidence" value="ECO:0007669"/>
    <property type="project" value="UniProtKB-KW"/>
</dbReference>
<dbReference type="GO" id="GO:0000921">
    <property type="term" value="P:septin ring assembly"/>
    <property type="evidence" value="ECO:0007669"/>
    <property type="project" value="InterPro"/>
</dbReference>
<dbReference type="HAMAP" id="MF_00728">
    <property type="entry name" value="EzrA"/>
    <property type="match status" value="1"/>
</dbReference>
<dbReference type="InterPro" id="IPR010379">
    <property type="entry name" value="EzrA"/>
</dbReference>
<dbReference type="NCBIfam" id="NF003411">
    <property type="entry name" value="PRK04778.1-5"/>
    <property type="match status" value="1"/>
</dbReference>
<dbReference type="NCBIfam" id="NF003413">
    <property type="entry name" value="PRK04778.1-7"/>
    <property type="match status" value="1"/>
</dbReference>
<dbReference type="Pfam" id="PF06160">
    <property type="entry name" value="EzrA"/>
    <property type="match status" value="1"/>
</dbReference>
<proteinExistence type="inferred from homology"/>
<accession>B9J153</accession>
<comment type="function">
    <text evidence="1">Negative regulator of FtsZ ring formation; modulates the frequency and position of FtsZ ring formation. Inhibits FtsZ ring formation at polar sites. Interacts either with FtsZ or with one of its binding partners to promote depolymerization.</text>
</comment>
<comment type="subcellular location">
    <subcellularLocation>
        <location evidence="1">Cell membrane</location>
        <topology evidence="1">Single-pass membrane protein</topology>
    </subcellularLocation>
    <text evidence="1">Colocalized with FtsZ to the nascent septal site.</text>
</comment>
<comment type="similarity">
    <text evidence="1">Belongs to the EzrA family.</text>
</comment>
<name>EZRA_BACCQ</name>
<organism>
    <name type="scientific">Bacillus cereus (strain Q1)</name>
    <dbReference type="NCBI Taxonomy" id="361100"/>
    <lineage>
        <taxon>Bacteria</taxon>
        <taxon>Bacillati</taxon>
        <taxon>Bacillota</taxon>
        <taxon>Bacilli</taxon>
        <taxon>Bacillales</taxon>
        <taxon>Bacillaceae</taxon>
        <taxon>Bacillus</taxon>
        <taxon>Bacillus cereus group</taxon>
    </lineage>
</organism>
<reference key="1">
    <citation type="journal article" date="2009" name="J. Bacteriol.">
        <title>Complete genome sequence of the extremophilic Bacillus cereus strain Q1 with industrial applications.</title>
        <authorList>
            <person name="Xiong Z."/>
            <person name="Jiang Y."/>
            <person name="Qi D."/>
            <person name="Lu H."/>
            <person name="Yang F."/>
            <person name="Yang J."/>
            <person name="Chen L."/>
            <person name="Sun L."/>
            <person name="Xu X."/>
            <person name="Xue Y."/>
            <person name="Zhu Y."/>
            <person name="Jin Q."/>
        </authorList>
    </citation>
    <scope>NUCLEOTIDE SEQUENCE [LARGE SCALE GENOMIC DNA]</scope>
    <source>
        <strain>Q1</strain>
    </source>
</reference>
<keyword id="KW-0131">Cell cycle</keyword>
<keyword id="KW-0132">Cell division</keyword>
<keyword id="KW-1003">Cell membrane</keyword>
<keyword id="KW-0175">Coiled coil</keyword>
<keyword id="KW-0472">Membrane</keyword>
<keyword id="KW-0717">Septation</keyword>
<keyword id="KW-0812">Transmembrane</keyword>
<keyword id="KW-1133">Transmembrane helix</keyword>
<gene>
    <name evidence="1" type="primary">ezrA</name>
    <name type="ordered locus">BCQ_4465</name>
</gene>
<feature type="chain" id="PRO_1000148069" description="Septation ring formation regulator EzrA">
    <location>
        <begin position="1"/>
        <end position="570"/>
    </location>
</feature>
<feature type="topological domain" description="Extracellular" evidence="1">
    <location>
        <begin position="1"/>
        <end position="6"/>
    </location>
</feature>
<feature type="transmembrane region" description="Helical" evidence="1">
    <location>
        <begin position="7"/>
        <end position="25"/>
    </location>
</feature>
<feature type="topological domain" description="Cytoplasmic" evidence="1">
    <location>
        <begin position="26"/>
        <end position="570"/>
    </location>
</feature>
<feature type="coiled-coil region" evidence="1">
    <location>
        <begin position="115"/>
        <end position="149"/>
    </location>
</feature>
<feature type="coiled-coil region" evidence="1">
    <location>
        <begin position="275"/>
        <end position="303"/>
    </location>
</feature>
<feature type="coiled-coil region" evidence="1">
    <location>
        <begin position="355"/>
        <end position="429"/>
    </location>
</feature>
<evidence type="ECO:0000255" key="1">
    <source>
        <dbReference type="HAMAP-Rule" id="MF_00728"/>
    </source>
</evidence>